<keyword id="KW-0963">Cytoplasm</keyword>
<keyword id="KW-0312">Gluconeogenesis</keyword>
<keyword id="KW-0324">Glycolysis</keyword>
<keyword id="KW-0413">Isomerase</keyword>
<keyword id="KW-1185">Reference proteome</keyword>
<accession>Q8XI54</accession>
<proteinExistence type="inferred from homology"/>
<organism>
    <name type="scientific">Clostridium perfringens (strain 13 / Type A)</name>
    <dbReference type="NCBI Taxonomy" id="195102"/>
    <lineage>
        <taxon>Bacteria</taxon>
        <taxon>Bacillati</taxon>
        <taxon>Bacillota</taxon>
        <taxon>Clostridia</taxon>
        <taxon>Eubacteriales</taxon>
        <taxon>Clostridiaceae</taxon>
        <taxon>Clostridium</taxon>
    </lineage>
</organism>
<protein>
    <recommendedName>
        <fullName evidence="1">Glucose-6-phosphate isomerase</fullName>
        <shortName evidence="1">GPI</shortName>
        <ecNumber evidence="1">5.3.1.9</ecNumber>
    </recommendedName>
    <alternativeName>
        <fullName evidence="1">Phosphoglucose isomerase</fullName>
        <shortName evidence="1">PGI</shortName>
    </alternativeName>
    <alternativeName>
        <fullName evidence="1">Phosphohexose isomerase</fullName>
        <shortName evidence="1">PHI</shortName>
    </alternativeName>
</protein>
<comment type="function">
    <text evidence="1">Catalyzes the reversible isomerization of glucose-6-phosphate to fructose-6-phosphate.</text>
</comment>
<comment type="catalytic activity">
    <reaction evidence="1">
        <text>alpha-D-glucose 6-phosphate = beta-D-fructose 6-phosphate</text>
        <dbReference type="Rhea" id="RHEA:11816"/>
        <dbReference type="ChEBI" id="CHEBI:57634"/>
        <dbReference type="ChEBI" id="CHEBI:58225"/>
        <dbReference type="EC" id="5.3.1.9"/>
    </reaction>
</comment>
<comment type="pathway">
    <text evidence="1">Carbohydrate biosynthesis; gluconeogenesis.</text>
</comment>
<comment type="pathway">
    <text evidence="1">Carbohydrate degradation; glycolysis; D-glyceraldehyde 3-phosphate and glycerone phosphate from D-glucose: step 2/4.</text>
</comment>
<comment type="subcellular location">
    <subcellularLocation>
        <location evidence="1">Cytoplasm</location>
    </subcellularLocation>
</comment>
<comment type="similarity">
    <text evidence="1">Belongs to the GPI family.</text>
</comment>
<dbReference type="EC" id="5.3.1.9" evidence="1"/>
<dbReference type="EMBL" id="BA000016">
    <property type="protein sequence ID" value="BAB81973.1"/>
    <property type="molecule type" value="Genomic_DNA"/>
</dbReference>
<dbReference type="RefSeq" id="WP_003462349.1">
    <property type="nucleotide sequence ID" value="NC_003366.1"/>
</dbReference>
<dbReference type="SMR" id="Q8XI54"/>
<dbReference type="STRING" id="195102.gene:10491575"/>
<dbReference type="KEGG" id="cpe:CPE2267"/>
<dbReference type="HOGENOM" id="CLU_037303_0_1_9"/>
<dbReference type="UniPathway" id="UPA00109">
    <property type="reaction ID" value="UER00181"/>
</dbReference>
<dbReference type="UniPathway" id="UPA00138"/>
<dbReference type="Proteomes" id="UP000000818">
    <property type="component" value="Chromosome"/>
</dbReference>
<dbReference type="GO" id="GO:0005829">
    <property type="term" value="C:cytosol"/>
    <property type="evidence" value="ECO:0007669"/>
    <property type="project" value="TreeGrafter"/>
</dbReference>
<dbReference type="GO" id="GO:0097367">
    <property type="term" value="F:carbohydrate derivative binding"/>
    <property type="evidence" value="ECO:0007669"/>
    <property type="project" value="InterPro"/>
</dbReference>
<dbReference type="GO" id="GO:0004347">
    <property type="term" value="F:glucose-6-phosphate isomerase activity"/>
    <property type="evidence" value="ECO:0007669"/>
    <property type="project" value="UniProtKB-UniRule"/>
</dbReference>
<dbReference type="GO" id="GO:0048029">
    <property type="term" value="F:monosaccharide binding"/>
    <property type="evidence" value="ECO:0007669"/>
    <property type="project" value="TreeGrafter"/>
</dbReference>
<dbReference type="GO" id="GO:0006094">
    <property type="term" value="P:gluconeogenesis"/>
    <property type="evidence" value="ECO:0007669"/>
    <property type="project" value="UniProtKB-UniRule"/>
</dbReference>
<dbReference type="GO" id="GO:0051156">
    <property type="term" value="P:glucose 6-phosphate metabolic process"/>
    <property type="evidence" value="ECO:0007669"/>
    <property type="project" value="TreeGrafter"/>
</dbReference>
<dbReference type="GO" id="GO:0006096">
    <property type="term" value="P:glycolytic process"/>
    <property type="evidence" value="ECO:0007669"/>
    <property type="project" value="UniProtKB-UniRule"/>
</dbReference>
<dbReference type="CDD" id="cd05015">
    <property type="entry name" value="SIS_PGI_1"/>
    <property type="match status" value="1"/>
</dbReference>
<dbReference type="CDD" id="cd05016">
    <property type="entry name" value="SIS_PGI_2"/>
    <property type="match status" value="1"/>
</dbReference>
<dbReference type="FunFam" id="3.40.50.10490:FF:000015">
    <property type="entry name" value="Glucose-6-phosphate isomerase"/>
    <property type="match status" value="1"/>
</dbReference>
<dbReference type="FunFam" id="3.40.50.10490:FF:000016">
    <property type="entry name" value="Glucose-6-phosphate isomerase"/>
    <property type="match status" value="1"/>
</dbReference>
<dbReference type="Gene3D" id="3.40.50.10490">
    <property type="entry name" value="Glucose-6-phosphate isomerase like protein, domain 1"/>
    <property type="match status" value="3"/>
</dbReference>
<dbReference type="HAMAP" id="MF_00473">
    <property type="entry name" value="G6P_isomerase"/>
    <property type="match status" value="1"/>
</dbReference>
<dbReference type="InterPro" id="IPR001672">
    <property type="entry name" value="G6P_Isomerase"/>
</dbReference>
<dbReference type="InterPro" id="IPR018189">
    <property type="entry name" value="Phosphoglucose_isomerase_CS"/>
</dbReference>
<dbReference type="InterPro" id="IPR046348">
    <property type="entry name" value="SIS_dom_sf"/>
</dbReference>
<dbReference type="InterPro" id="IPR035476">
    <property type="entry name" value="SIS_PGI_1"/>
</dbReference>
<dbReference type="InterPro" id="IPR035482">
    <property type="entry name" value="SIS_PGI_2"/>
</dbReference>
<dbReference type="NCBIfam" id="NF010697">
    <property type="entry name" value="PRK14097.1"/>
    <property type="match status" value="1"/>
</dbReference>
<dbReference type="PANTHER" id="PTHR11469">
    <property type="entry name" value="GLUCOSE-6-PHOSPHATE ISOMERASE"/>
    <property type="match status" value="1"/>
</dbReference>
<dbReference type="PANTHER" id="PTHR11469:SF1">
    <property type="entry name" value="GLUCOSE-6-PHOSPHATE ISOMERASE"/>
    <property type="match status" value="1"/>
</dbReference>
<dbReference type="Pfam" id="PF00342">
    <property type="entry name" value="PGI"/>
    <property type="match status" value="1"/>
</dbReference>
<dbReference type="PRINTS" id="PR00662">
    <property type="entry name" value="G6PISOMERASE"/>
</dbReference>
<dbReference type="SUPFAM" id="SSF53697">
    <property type="entry name" value="SIS domain"/>
    <property type="match status" value="1"/>
</dbReference>
<dbReference type="PROSITE" id="PS00765">
    <property type="entry name" value="P_GLUCOSE_ISOMERASE_1"/>
    <property type="match status" value="1"/>
</dbReference>
<dbReference type="PROSITE" id="PS00174">
    <property type="entry name" value="P_GLUCOSE_ISOMERASE_2"/>
    <property type="match status" value="1"/>
</dbReference>
<dbReference type="PROSITE" id="PS51463">
    <property type="entry name" value="P_GLUCOSE_ISOMERASE_3"/>
    <property type="match status" value="1"/>
</dbReference>
<reference key="1">
    <citation type="journal article" date="2002" name="Proc. Natl. Acad. Sci. U.S.A.">
        <title>Complete genome sequence of Clostridium perfringens, an anaerobic flesh-eater.</title>
        <authorList>
            <person name="Shimizu T."/>
            <person name="Ohtani K."/>
            <person name="Hirakawa H."/>
            <person name="Ohshima K."/>
            <person name="Yamashita A."/>
            <person name="Shiba T."/>
            <person name="Ogasawara N."/>
            <person name="Hattori M."/>
            <person name="Kuhara S."/>
            <person name="Hayashi H."/>
        </authorList>
    </citation>
    <scope>NUCLEOTIDE SEQUENCE [LARGE SCALE GENOMIC DNA]</scope>
    <source>
        <strain>13 / Type A</strain>
    </source>
</reference>
<evidence type="ECO:0000255" key="1">
    <source>
        <dbReference type="HAMAP-Rule" id="MF_00473"/>
    </source>
</evidence>
<name>G6PI_CLOPE</name>
<feature type="chain" id="PRO_0000180627" description="Glucose-6-phosphate isomerase">
    <location>
        <begin position="1"/>
        <end position="450"/>
    </location>
</feature>
<feature type="active site" description="Proton donor" evidence="1">
    <location>
        <position position="291"/>
    </location>
</feature>
<feature type="active site" evidence="1">
    <location>
        <position position="312"/>
    </location>
</feature>
<feature type="active site" evidence="1">
    <location>
        <position position="426"/>
    </location>
</feature>
<sequence length="450" mass="49771">MKKGLVVDLSKAAPYLKSHEVAYMQETINQAHNKLHNGTGAGNDFLGWVDLPVNYDKDEFARIKEAAKKIQSDSDVLVVIGIGGSYLGARAAIEMLTNNFYNSMSKDKRKTPAIFYAGNNISSSYMADLLKAIDGLDVSLNVISKSGTTTEPAIAFRILKDYMEKKYGKEEAKKRIYATTDAKKGALKTLADAEGYETFVIPDDVGGRFSVLTAVGLLPIAAAGINIDEMMEGAADAREEYANPSLADNECYKYAAARNALYNKGKAIEILVNYEPSVHYFNEWWKQLYGESEGKDNKGLFPAAVDFSTDLHSMGQYIQEGRRDIFETVINVGSPREEIVIEANDENIDGLNFLAGKTMDYVNKQAFRGTLLAHNDGEVPNVVVNVPELTPYYFGRLVYFFEKACGISGYVLGINPFDQPGVEAYKKNMFALLGKPGFEDLKAELEERLK</sequence>
<gene>
    <name evidence="1" type="primary">pgi</name>
    <name type="ordered locus">CPE2267</name>
</gene>